<accession>Q4L582</accession>
<organism>
    <name type="scientific">Staphylococcus haemolyticus (strain JCSC1435)</name>
    <dbReference type="NCBI Taxonomy" id="279808"/>
    <lineage>
        <taxon>Bacteria</taxon>
        <taxon>Bacillati</taxon>
        <taxon>Bacillota</taxon>
        <taxon>Bacilli</taxon>
        <taxon>Bacillales</taxon>
        <taxon>Staphylococcaceae</taxon>
        <taxon>Staphylococcus</taxon>
    </lineage>
</organism>
<proteinExistence type="inferred from homology"/>
<evidence type="ECO:0000255" key="1">
    <source>
        <dbReference type="HAMAP-Rule" id="MF_00139"/>
    </source>
</evidence>
<evidence type="ECO:0000255" key="2">
    <source>
        <dbReference type="PROSITE-ProRule" id="PRU01202"/>
    </source>
</evidence>
<protein>
    <recommendedName>
        <fullName evidence="1">Bifunctional purine biosynthesis protein PurH</fullName>
    </recommendedName>
    <domain>
        <recommendedName>
            <fullName evidence="1">Phosphoribosylaminoimidazolecarboxamide formyltransferase</fullName>
            <ecNumber evidence="1">2.1.2.3</ecNumber>
        </recommendedName>
        <alternativeName>
            <fullName evidence="1">AICAR transformylase</fullName>
        </alternativeName>
    </domain>
    <domain>
        <recommendedName>
            <fullName evidence="1">IMP cyclohydrolase</fullName>
            <ecNumber evidence="1">3.5.4.10</ecNumber>
        </recommendedName>
        <alternativeName>
            <fullName evidence="1">ATIC</fullName>
        </alternativeName>
        <alternativeName>
            <fullName evidence="1">IMP synthase</fullName>
        </alternativeName>
        <alternativeName>
            <fullName evidence="1">Inosinicase</fullName>
        </alternativeName>
    </domain>
</protein>
<keyword id="KW-0378">Hydrolase</keyword>
<keyword id="KW-0511">Multifunctional enzyme</keyword>
<keyword id="KW-0658">Purine biosynthesis</keyword>
<keyword id="KW-0808">Transferase</keyword>
<sequence>MKKAILSVSNKSGIVEFAKSLIKLDYELYSTGGTKGALEDASVPVKSVSELTQFPEIMDGRVKTLHPAVHGGILADRDKPEHLEQLSEQHIDLIDMVVVNLYPFQKTVAKPDVTEAEAIENIDIGGPTMLRAAAKNFKHVTTIVHPADYNEVIERIKEDRLDEDFRKELMIKVFAHTNEYDHAIVSFFKGDSEQLRYGENPQQSARFVRTSNSKHTIAGAKQLHGKALSFNNIKDADSALSLVKKFKESAAVAVKHMNPCGVGIGDNIETAFKHAYDADNQSIFGGIIALNRTVTSDLAETLHAIFLEVVIAPRFTDEALDILTKKKNIRLLEIDMTIDNREEEFVSVSGGYLVQDKDNFEVAKEDMKVVTDKAPTDDQWDAMLLGWKVIPSVKSNAVILSNTKQTVGIGAGQMNRVGSAKIALERAIEINDNVALVSDGFFPMDDTVELAAQHGIKAIIQPGGSIKDQDSIDMANKYGIAMVTTGMRHFKH</sequence>
<reference key="1">
    <citation type="journal article" date="2005" name="J. Bacteriol.">
        <title>Whole-genome sequencing of Staphylococcus haemolyticus uncovers the extreme plasticity of its genome and the evolution of human-colonizing staphylococcal species.</title>
        <authorList>
            <person name="Takeuchi F."/>
            <person name="Watanabe S."/>
            <person name="Baba T."/>
            <person name="Yuzawa H."/>
            <person name="Ito T."/>
            <person name="Morimoto Y."/>
            <person name="Kuroda M."/>
            <person name="Cui L."/>
            <person name="Takahashi M."/>
            <person name="Ankai A."/>
            <person name="Baba S."/>
            <person name="Fukui S."/>
            <person name="Lee J.C."/>
            <person name="Hiramatsu K."/>
        </authorList>
    </citation>
    <scope>NUCLEOTIDE SEQUENCE [LARGE SCALE GENOMIC DNA]</scope>
    <source>
        <strain>JCSC1435</strain>
    </source>
</reference>
<gene>
    <name evidence="1" type="primary">purH</name>
    <name type="ordered locus">SH1884</name>
</gene>
<name>PUR9_STAHJ</name>
<comment type="catalytic activity">
    <reaction evidence="1">
        <text>(6R)-10-formyltetrahydrofolate + 5-amino-1-(5-phospho-beta-D-ribosyl)imidazole-4-carboxamide = 5-formamido-1-(5-phospho-D-ribosyl)imidazole-4-carboxamide + (6S)-5,6,7,8-tetrahydrofolate</text>
        <dbReference type="Rhea" id="RHEA:22192"/>
        <dbReference type="ChEBI" id="CHEBI:57453"/>
        <dbReference type="ChEBI" id="CHEBI:58467"/>
        <dbReference type="ChEBI" id="CHEBI:58475"/>
        <dbReference type="ChEBI" id="CHEBI:195366"/>
        <dbReference type="EC" id="2.1.2.3"/>
    </reaction>
</comment>
<comment type="catalytic activity">
    <reaction evidence="1">
        <text>IMP + H2O = 5-formamido-1-(5-phospho-D-ribosyl)imidazole-4-carboxamide</text>
        <dbReference type="Rhea" id="RHEA:18445"/>
        <dbReference type="ChEBI" id="CHEBI:15377"/>
        <dbReference type="ChEBI" id="CHEBI:58053"/>
        <dbReference type="ChEBI" id="CHEBI:58467"/>
        <dbReference type="EC" id="3.5.4.10"/>
    </reaction>
</comment>
<comment type="pathway">
    <text evidence="1">Purine metabolism; IMP biosynthesis via de novo pathway; 5-formamido-1-(5-phospho-D-ribosyl)imidazole-4-carboxamide from 5-amino-1-(5-phospho-D-ribosyl)imidazole-4-carboxamide (10-formyl THF route): step 1/1.</text>
</comment>
<comment type="pathway">
    <text evidence="1">Purine metabolism; IMP biosynthesis via de novo pathway; IMP from 5-formamido-1-(5-phospho-D-ribosyl)imidazole-4-carboxamide: step 1/1.</text>
</comment>
<comment type="domain">
    <text evidence="1">The IMP cyclohydrolase activity resides in the N-terminal region.</text>
</comment>
<comment type="similarity">
    <text evidence="1">Belongs to the PurH family.</text>
</comment>
<feature type="chain" id="PRO_1000018964" description="Bifunctional purine biosynthesis protein PurH">
    <location>
        <begin position="1"/>
        <end position="492"/>
    </location>
</feature>
<feature type="domain" description="MGS-like" evidence="2">
    <location>
        <begin position="1"/>
        <end position="144"/>
    </location>
</feature>
<dbReference type="EC" id="2.1.2.3" evidence="1"/>
<dbReference type="EC" id="3.5.4.10" evidence="1"/>
<dbReference type="EMBL" id="AP006716">
    <property type="protein sequence ID" value="BAE05193.1"/>
    <property type="molecule type" value="Genomic_DNA"/>
</dbReference>
<dbReference type="RefSeq" id="WP_011276157.1">
    <property type="nucleotide sequence ID" value="NC_007168.1"/>
</dbReference>
<dbReference type="SMR" id="Q4L582"/>
<dbReference type="GeneID" id="93781250"/>
<dbReference type="KEGG" id="sha:SH1884"/>
<dbReference type="eggNOG" id="COG0138">
    <property type="taxonomic scope" value="Bacteria"/>
</dbReference>
<dbReference type="HOGENOM" id="CLU_016316_5_2_9"/>
<dbReference type="OrthoDB" id="9802065at2"/>
<dbReference type="UniPathway" id="UPA00074">
    <property type="reaction ID" value="UER00133"/>
</dbReference>
<dbReference type="UniPathway" id="UPA00074">
    <property type="reaction ID" value="UER00135"/>
</dbReference>
<dbReference type="Proteomes" id="UP000000543">
    <property type="component" value="Chromosome"/>
</dbReference>
<dbReference type="GO" id="GO:0005829">
    <property type="term" value="C:cytosol"/>
    <property type="evidence" value="ECO:0007669"/>
    <property type="project" value="TreeGrafter"/>
</dbReference>
<dbReference type="GO" id="GO:0003937">
    <property type="term" value="F:IMP cyclohydrolase activity"/>
    <property type="evidence" value="ECO:0007669"/>
    <property type="project" value="UniProtKB-UniRule"/>
</dbReference>
<dbReference type="GO" id="GO:0004643">
    <property type="term" value="F:phosphoribosylaminoimidazolecarboxamide formyltransferase activity"/>
    <property type="evidence" value="ECO:0007669"/>
    <property type="project" value="UniProtKB-UniRule"/>
</dbReference>
<dbReference type="GO" id="GO:0006189">
    <property type="term" value="P:'de novo' IMP biosynthetic process"/>
    <property type="evidence" value="ECO:0007669"/>
    <property type="project" value="UniProtKB-UniRule"/>
</dbReference>
<dbReference type="CDD" id="cd01421">
    <property type="entry name" value="IMPCH"/>
    <property type="match status" value="1"/>
</dbReference>
<dbReference type="FunFam" id="3.40.140.20:FF:000001">
    <property type="entry name" value="Bifunctional purine biosynthesis protein PurH"/>
    <property type="match status" value="1"/>
</dbReference>
<dbReference type="FunFam" id="3.40.140.20:FF:000002">
    <property type="entry name" value="Bifunctional purine biosynthesis protein PurH"/>
    <property type="match status" value="1"/>
</dbReference>
<dbReference type="FunFam" id="3.40.50.1380:FF:000001">
    <property type="entry name" value="Bifunctional purine biosynthesis protein PurH"/>
    <property type="match status" value="1"/>
</dbReference>
<dbReference type="Gene3D" id="3.40.140.20">
    <property type="match status" value="2"/>
</dbReference>
<dbReference type="Gene3D" id="3.40.50.1380">
    <property type="entry name" value="Methylglyoxal synthase-like domain"/>
    <property type="match status" value="1"/>
</dbReference>
<dbReference type="HAMAP" id="MF_00139">
    <property type="entry name" value="PurH"/>
    <property type="match status" value="1"/>
</dbReference>
<dbReference type="InterPro" id="IPR024051">
    <property type="entry name" value="AICAR_Tfase_dup_dom_sf"/>
</dbReference>
<dbReference type="InterPro" id="IPR016193">
    <property type="entry name" value="Cytidine_deaminase-like"/>
</dbReference>
<dbReference type="InterPro" id="IPR011607">
    <property type="entry name" value="MGS-like_dom"/>
</dbReference>
<dbReference type="InterPro" id="IPR036914">
    <property type="entry name" value="MGS-like_dom_sf"/>
</dbReference>
<dbReference type="InterPro" id="IPR002695">
    <property type="entry name" value="PurH-like"/>
</dbReference>
<dbReference type="NCBIfam" id="NF002049">
    <property type="entry name" value="PRK00881.1"/>
    <property type="match status" value="1"/>
</dbReference>
<dbReference type="NCBIfam" id="TIGR00355">
    <property type="entry name" value="purH"/>
    <property type="match status" value="1"/>
</dbReference>
<dbReference type="PANTHER" id="PTHR11692:SF0">
    <property type="entry name" value="BIFUNCTIONAL PURINE BIOSYNTHESIS PROTEIN ATIC"/>
    <property type="match status" value="1"/>
</dbReference>
<dbReference type="PANTHER" id="PTHR11692">
    <property type="entry name" value="BIFUNCTIONAL PURINE BIOSYNTHESIS PROTEIN PURH"/>
    <property type="match status" value="1"/>
</dbReference>
<dbReference type="Pfam" id="PF01808">
    <property type="entry name" value="AICARFT_IMPCHas"/>
    <property type="match status" value="1"/>
</dbReference>
<dbReference type="Pfam" id="PF02142">
    <property type="entry name" value="MGS"/>
    <property type="match status" value="1"/>
</dbReference>
<dbReference type="PIRSF" id="PIRSF000414">
    <property type="entry name" value="AICARFT_IMPCHas"/>
    <property type="match status" value="1"/>
</dbReference>
<dbReference type="SMART" id="SM00798">
    <property type="entry name" value="AICARFT_IMPCHas"/>
    <property type="match status" value="1"/>
</dbReference>
<dbReference type="SMART" id="SM00851">
    <property type="entry name" value="MGS"/>
    <property type="match status" value="1"/>
</dbReference>
<dbReference type="SUPFAM" id="SSF53927">
    <property type="entry name" value="Cytidine deaminase-like"/>
    <property type="match status" value="1"/>
</dbReference>
<dbReference type="SUPFAM" id="SSF52335">
    <property type="entry name" value="Methylglyoxal synthase-like"/>
    <property type="match status" value="1"/>
</dbReference>
<dbReference type="PROSITE" id="PS51855">
    <property type="entry name" value="MGS"/>
    <property type="match status" value="1"/>
</dbReference>